<feature type="chain" id="PRO_1000213313" description="2-isopropylmalate synthase">
    <location>
        <begin position="1"/>
        <end position="526"/>
    </location>
</feature>
<feature type="domain" description="Pyruvate carboxyltransferase" evidence="1">
    <location>
        <begin position="5"/>
        <end position="267"/>
    </location>
</feature>
<feature type="region of interest" description="Regulatory domain" evidence="1">
    <location>
        <begin position="393"/>
        <end position="526"/>
    </location>
</feature>
<feature type="binding site" evidence="1">
    <location>
        <position position="14"/>
    </location>
    <ligand>
        <name>Mn(2+)</name>
        <dbReference type="ChEBI" id="CHEBI:29035"/>
    </ligand>
</feature>
<feature type="binding site" evidence="1">
    <location>
        <position position="202"/>
    </location>
    <ligand>
        <name>Mn(2+)</name>
        <dbReference type="ChEBI" id="CHEBI:29035"/>
    </ligand>
</feature>
<feature type="binding site" evidence="1">
    <location>
        <position position="204"/>
    </location>
    <ligand>
        <name>Mn(2+)</name>
        <dbReference type="ChEBI" id="CHEBI:29035"/>
    </ligand>
</feature>
<feature type="binding site" evidence="1">
    <location>
        <position position="238"/>
    </location>
    <ligand>
        <name>Mn(2+)</name>
        <dbReference type="ChEBI" id="CHEBI:29035"/>
    </ligand>
</feature>
<gene>
    <name evidence="1" type="primary">leuA</name>
    <name type="ordered locus">NT01EI_0720</name>
</gene>
<accession>C5B7R4</accession>
<protein>
    <recommendedName>
        <fullName evidence="1">2-isopropylmalate synthase</fullName>
        <ecNumber evidence="1">2.3.3.13</ecNumber>
    </recommendedName>
    <alternativeName>
        <fullName evidence="1">Alpha-IPM synthase</fullName>
    </alternativeName>
    <alternativeName>
        <fullName evidence="1">Alpha-isopropylmalate synthase</fullName>
    </alternativeName>
</protein>
<sequence>MKQQVIIFDTTLRDGEQALQASLSVKEKLQIALALERMGVDVMEVGFPISSPGDFASVRAIAQRVKQSRVCALARCVDADIDAAAEALRAADAFRIHTFLATSTLHLESKLRRSFDDAIAMARHAILRARRYTDDVEFSCEDAGRTPIDNLCRIVEAAIDAGAKTVNIPDTVGYTTPYQFGGIIHTLFERVPNIDKAVISVHCHDDLGMACANSISAIQSGARQVEGTLNGIGERAGNCALEEVIMAIRTRQDLLRVHTGIRHQEIYRTSQLVSQLCNMPIPANKAVVGANAFAHSSGIHQDGVLKNRENYEIMTPESIGLPQTQLNLTSRSGRAAVKHRMEEMGYCEGNDFDLERLYQAFLRLADKKGQVFDYDLEALAFIDRQQEEADHFRLEYFSVQSGSSVMATASVRLICGAETRAEAATGNGPVDAVYQAISRITDISVDIVKYQLSAKGQGRDALGQVDIVAEHQGRRFHGVGLTTDIVESSAQALIHVLNHIWRARQVEQERQRLHSPVPSISTSSTH</sequence>
<evidence type="ECO:0000255" key="1">
    <source>
        <dbReference type="HAMAP-Rule" id="MF_01025"/>
    </source>
</evidence>
<comment type="function">
    <text evidence="1">Catalyzes the condensation of the acetyl group of acetyl-CoA with 3-methyl-2-oxobutanoate (2-ketoisovalerate) to form 3-carboxy-3-hydroxy-4-methylpentanoate (2-isopropylmalate).</text>
</comment>
<comment type="catalytic activity">
    <reaction evidence="1">
        <text>3-methyl-2-oxobutanoate + acetyl-CoA + H2O = (2S)-2-isopropylmalate + CoA + H(+)</text>
        <dbReference type="Rhea" id="RHEA:21524"/>
        <dbReference type="ChEBI" id="CHEBI:1178"/>
        <dbReference type="ChEBI" id="CHEBI:11851"/>
        <dbReference type="ChEBI" id="CHEBI:15377"/>
        <dbReference type="ChEBI" id="CHEBI:15378"/>
        <dbReference type="ChEBI" id="CHEBI:57287"/>
        <dbReference type="ChEBI" id="CHEBI:57288"/>
        <dbReference type="EC" id="2.3.3.13"/>
    </reaction>
</comment>
<comment type="cofactor">
    <cofactor evidence="1">
        <name>Mn(2+)</name>
        <dbReference type="ChEBI" id="CHEBI:29035"/>
    </cofactor>
</comment>
<comment type="pathway">
    <text evidence="1">Amino-acid biosynthesis; L-leucine biosynthesis; L-leucine from 3-methyl-2-oxobutanoate: step 1/4.</text>
</comment>
<comment type="subunit">
    <text evidence="1">Homodimer.</text>
</comment>
<comment type="subcellular location">
    <subcellularLocation>
        <location evidence="1">Cytoplasm</location>
    </subcellularLocation>
</comment>
<comment type="similarity">
    <text evidence="1">Belongs to the alpha-IPM synthase/homocitrate synthase family. LeuA type 1 subfamily.</text>
</comment>
<keyword id="KW-0028">Amino-acid biosynthesis</keyword>
<keyword id="KW-0100">Branched-chain amino acid biosynthesis</keyword>
<keyword id="KW-0963">Cytoplasm</keyword>
<keyword id="KW-0432">Leucine biosynthesis</keyword>
<keyword id="KW-0464">Manganese</keyword>
<keyword id="KW-0479">Metal-binding</keyword>
<keyword id="KW-0808">Transferase</keyword>
<proteinExistence type="inferred from homology"/>
<organism>
    <name type="scientific">Edwardsiella ictaluri (strain 93-146)</name>
    <dbReference type="NCBI Taxonomy" id="634503"/>
    <lineage>
        <taxon>Bacteria</taxon>
        <taxon>Pseudomonadati</taxon>
        <taxon>Pseudomonadota</taxon>
        <taxon>Gammaproteobacteria</taxon>
        <taxon>Enterobacterales</taxon>
        <taxon>Hafniaceae</taxon>
        <taxon>Edwardsiella</taxon>
    </lineage>
</organism>
<dbReference type="EC" id="2.3.3.13" evidence="1"/>
<dbReference type="EMBL" id="CP001600">
    <property type="protein sequence ID" value="ACR67941.1"/>
    <property type="molecule type" value="Genomic_DNA"/>
</dbReference>
<dbReference type="RefSeq" id="WP_015870134.1">
    <property type="nucleotide sequence ID" value="NZ_CP169062.1"/>
</dbReference>
<dbReference type="SMR" id="C5B7R4"/>
<dbReference type="STRING" id="67780.B6E78_14235"/>
<dbReference type="GeneID" id="69537782"/>
<dbReference type="KEGG" id="eic:NT01EI_0720"/>
<dbReference type="PATRIC" id="fig|634503.3.peg.649"/>
<dbReference type="HOGENOM" id="CLU_022158_0_1_6"/>
<dbReference type="OrthoDB" id="9803573at2"/>
<dbReference type="UniPathway" id="UPA00048">
    <property type="reaction ID" value="UER00070"/>
</dbReference>
<dbReference type="Proteomes" id="UP000001485">
    <property type="component" value="Chromosome"/>
</dbReference>
<dbReference type="GO" id="GO:0005829">
    <property type="term" value="C:cytosol"/>
    <property type="evidence" value="ECO:0007669"/>
    <property type="project" value="TreeGrafter"/>
</dbReference>
<dbReference type="GO" id="GO:0003852">
    <property type="term" value="F:2-isopropylmalate synthase activity"/>
    <property type="evidence" value="ECO:0007669"/>
    <property type="project" value="UniProtKB-UniRule"/>
</dbReference>
<dbReference type="GO" id="GO:0003985">
    <property type="term" value="F:acetyl-CoA C-acetyltransferase activity"/>
    <property type="evidence" value="ECO:0007669"/>
    <property type="project" value="UniProtKB-UniRule"/>
</dbReference>
<dbReference type="GO" id="GO:0030145">
    <property type="term" value="F:manganese ion binding"/>
    <property type="evidence" value="ECO:0007669"/>
    <property type="project" value="UniProtKB-UniRule"/>
</dbReference>
<dbReference type="GO" id="GO:0009098">
    <property type="term" value="P:L-leucine biosynthetic process"/>
    <property type="evidence" value="ECO:0007669"/>
    <property type="project" value="UniProtKB-UniRule"/>
</dbReference>
<dbReference type="CDD" id="cd07940">
    <property type="entry name" value="DRE_TIM_IPMS"/>
    <property type="match status" value="1"/>
</dbReference>
<dbReference type="FunFam" id="1.10.238.260:FF:000001">
    <property type="entry name" value="2-isopropylmalate synthase"/>
    <property type="match status" value="1"/>
</dbReference>
<dbReference type="FunFam" id="3.20.20.70:FF:000010">
    <property type="entry name" value="2-isopropylmalate synthase"/>
    <property type="match status" value="1"/>
</dbReference>
<dbReference type="FunFam" id="3.30.160.270:FF:000001">
    <property type="entry name" value="2-isopropylmalate synthase"/>
    <property type="match status" value="1"/>
</dbReference>
<dbReference type="Gene3D" id="1.10.238.260">
    <property type="match status" value="1"/>
</dbReference>
<dbReference type="Gene3D" id="3.30.160.270">
    <property type="match status" value="1"/>
</dbReference>
<dbReference type="Gene3D" id="3.20.20.70">
    <property type="entry name" value="Aldolase class I"/>
    <property type="match status" value="1"/>
</dbReference>
<dbReference type="HAMAP" id="MF_01025">
    <property type="entry name" value="LeuA_type1"/>
    <property type="match status" value="1"/>
</dbReference>
<dbReference type="InterPro" id="IPR050073">
    <property type="entry name" value="2-IPM_HCS-like"/>
</dbReference>
<dbReference type="InterPro" id="IPR013709">
    <property type="entry name" value="2-isopropylmalate_synth_dimer"/>
</dbReference>
<dbReference type="InterPro" id="IPR002034">
    <property type="entry name" value="AIPM/Hcit_synth_CS"/>
</dbReference>
<dbReference type="InterPro" id="IPR013785">
    <property type="entry name" value="Aldolase_TIM"/>
</dbReference>
<dbReference type="InterPro" id="IPR054691">
    <property type="entry name" value="LeuA/HCS_post-cat"/>
</dbReference>
<dbReference type="InterPro" id="IPR036230">
    <property type="entry name" value="LeuA_allosteric_dom_sf"/>
</dbReference>
<dbReference type="InterPro" id="IPR005671">
    <property type="entry name" value="LeuA_bact_synth"/>
</dbReference>
<dbReference type="InterPro" id="IPR000891">
    <property type="entry name" value="PYR_CT"/>
</dbReference>
<dbReference type="NCBIfam" id="TIGR00973">
    <property type="entry name" value="leuA_bact"/>
    <property type="match status" value="1"/>
</dbReference>
<dbReference type="NCBIfam" id="NF002084">
    <property type="entry name" value="PRK00915.1-1"/>
    <property type="match status" value="1"/>
</dbReference>
<dbReference type="NCBIfam" id="NF002086">
    <property type="entry name" value="PRK00915.1-3"/>
    <property type="match status" value="1"/>
</dbReference>
<dbReference type="PANTHER" id="PTHR10277:SF9">
    <property type="entry name" value="2-ISOPROPYLMALATE SYNTHASE 1, CHLOROPLASTIC-RELATED"/>
    <property type="match status" value="1"/>
</dbReference>
<dbReference type="PANTHER" id="PTHR10277">
    <property type="entry name" value="HOMOCITRATE SYNTHASE-RELATED"/>
    <property type="match status" value="1"/>
</dbReference>
<dbReference type="Pfam" id="PF22617">
    <property type="entry name" value="HCS_D2"/>
    <property type="match status" value="1"/>
</dbReference>
<dbReference type="Pfam" id="PF00682">
    <property type="entry name" value="HMGL-like"/>
    <property type="match status" value="1"/>
</dbReference>
<dbReference type="Pfam" id="PF08502">
    <property type="entry name" value="LeuA_dimer"/>
    <property type="match status" value="1"/>
</dbReference>
<dbReference type="SMART" id="SM00917">
    <property type="entry name" value="LeuA_dimer"/>
    <property type="match status" value="1"/>
</dbReference>
<dbReference type="SUPFAM" id="SSF110921">
    <property type="entry name" value="2-isopropylmalate synthase LeuA, allosteric (dimerisation) domain"/>
    <property type="match status" value="1"/>
</dbReference>
<dbReference type="SUPFAM" id="SSF51569">
    <property type="entry name" value="Aldolase"/>
    <property type="match status" value="1"/>
</dbReference>
<dbReference type="PROSITE" id="PS00815">
    <property type="entry name" value="AIPM_HOMOCIT_SYNTH_1"/>
    <property type="match status" value="1"/>
</dbReference>
<dbReference type="PROSITE" id="PS00816">
    <property type="entry name" value="AIPM_HOMOCIT_SYNTH_2"/>
    <property type="match status" value="1"/>
</dbReference>
<dbReference type="PROSITE" id="PS50991">
    <property type="entry name" value="PYR_CT"/>
    <property type="match status" value="1"/>
</dbReference>
<name>LEU1_EDWI9</name>
<reference key="1">
    <citation type="submission" date="2009-03" db="EMBL/GenBank/DDBJ databases">
        <title>Complete genome sequence of Edwardsiella ictaluri 93-146.</title>
        <authorList>
            <person name="Williams M.L."/>
            <person name="Gillaspy A.F."/>
            <person name="Dyer D.W."/>
            <person name="Thune R.L."/>
            <person name="Waldbieser G.C."/>
            <person name="Schuster S.C."/>
            <person name="Gipson J."/>
            <person name="Zaitshik J."/>
            <person name="Landry C."/>
            <person name="Lawrence M.L."/>
        </authorList>
    </citation>
    <scope>NUCLEOTIDE SEQUENCE [LARGE SCALE GENOMIC DNA]</scope>
    <source>
        <strain>93-146</strain>
    </source>
</reference>